<dbReference type="EC" id="2.1.1.223" evidence="1"/>
<dbReference type="EMBL" id="AE016795">
    <property type="protein sequence ID" value="AAO09051.1"/>
    <property type="molecule type" value="Genomic_DNA"/>
</dbReference>
<dbReference type="RefSeq" id="WP_011078621.1">
    <property type="nucleotide sequence ID" value="NC_004459.3"/>
</dbReference>
<dbReference type="SMR" id="Q8DEQ3"/>
<dbReference type="KEGG" id="vvu:VV1_0533"/>
<dbReference type="HOGENOM" id="CLU_061983_0_0_6"/>
<dbReference type="Proteomes" id="UP000002275">
    <property type="component" value="Chromosome 1"/>
</dbReference>
<dbReference type="GO" id="GO:0005737">
    <property type="term" value="C:cytoplasm"/>
    <property type="evidence" value="ECO:0007669"/>
    <property type="project" value="UniProtKB-SubCell"/>
</dbReference>
<dbReference type="GO" id="GO:0003676">
    <property type="term" value="F:nucleic acid binding"/>
    <property type="evidence" value="ECO:0007669"/>
    <property type="project" value="InterPro"/>
</dbReference>
<dbReference type="GO" id="GO:0016430">
    <property type="term" value="F:tRNA (adenine-N6)-methyltransferase activity"/>
    <property type="evidence" value="ECO:0007669"/>
    <property type="project" value="UniProtKB-UniRule"/>
</dbReference>
<dbReference type="GO" id="GO:0032259">
    <property type="term" value="P:methylation"/>
    <property type="evidence" value="ECO:0007669"/>
    <property type="project" value="UniProtKB-KW"/>
</dbReference>
<dbReference type="GO" id="GO:0008033">
    <property type="term" value="P:tRNA processing"/>
    <property type="evidence" value="ECO:0007669"/>
    <property type="project" value="UniProtKB-UniRule"/>
</dbReference>
<dbReference type="CDD" id="cd02440">
    <property type="entry name" value="AdoMet_MTases"/>
    <property type="match status" value="1"/>
</dbReference>
<dbReference type="Gene3D" id="3.40.50.150">
    <property type="entry name" value="Vaccinia Virus protein VP39"/>
    <property type="match status" value="1"/>
</dbReference>
<dbReference type="HAMAP" id="MF_01872">
    <property type="entry name" value="tRNA_methyltr_YfiC"/>
    <property type="match status" value="1"/>
</dbReference>
<dbReference type="InterPro" id="IPR002052">
    <property type="entry name" value="DNA_methylase_N6_adenine_CS"/>
</dbReference>
<dbReference type="InterPro" id="IPR029063">
    <property type="entry name" value="SAM-dependent_MTases_sf"/>
</dbReference>
<dbReference type="InterPro" id="IPR007848">
    <property type="entry name" value="Small_mtfrase_dom"/>
</dbReference>
<dbReference type="InterPro" id="IPR050210">
    <property type="entry name" value="tRNA_Adenine-N(6)_MTase"/>
</dbReference>
<dbReference type="InterPro" id="IPR022882">
    <property type="entry name" value="tRNA_adenine-N6_MeTrfase"/>
</dbReference>
<dbReference type="PANTHER" id="PTHR47739">
    <property type="entry name" value="TRNA1(VAL) (ADENINE(37)-N6)-METHYLTRANSFERASE"/>
    <property type="match status" value="1"/>
</dbReference>
<dbReference type="PANTHER" id="PTHR47739:SF1">
    <property type="entry name" value="TRNA1(VAL) (ADENINE(37)-N6)-METHYLTRANSFERASE"/>
    <property type="match status" value="1"/>
</dbReference>
<dbReference type="Pfam" id="PF05175">
    <property type="entry name" value="MTS"/>
    <property type="match status" value="1"/>
</dbReference>
<dbReference type="PRINTS" id="PR00507">
    <property type="entry name" value="N12N6MTFRASE"/>
</dbReference>
<dbReference type="SUPFAM" id="SSF53335">
    <property type="entry name" value="S-adenosyl-L-methionine-dependent methyltransferases"/>
    <property type="match status" value="1"/>
</dbReference>
<dbReference type="PROSITE" id="PS00092">
    <property type="entry name" value="N6_MTASE"/>
    <property type="match status" value="1"/>
</dbReference>
<name>TRMN6_VIBVU</name>
<keyword id="KW-0963">Cytoplasm</keyword>
<keyword id="KW-0489">Methyltransferase</keyword>
<keyword id="KW-0949">S-adenosyl-L-methionine</keyword>
<keyword id="KW-0808">Transferase</keyword>
<keyword id="KW-0819">tRNA processing</keyword>
<comment type="function">
    <text evidence="1">Specifically methylates the adenine in position 37 of tRNA(1)(Val) (anticodon cmo5UAC).</text>
</comment>
<comment type="catalytic activity">
    <reaction evidence="1">
        <text>adenosine(37) in tRNA1(Val) + S-adenosyl-L-methionine = N(6)-methyladenosine(37) in tRNA1(Val) + S-adenosyl-L-homocysteine + H(+)</text>
        <dbReference type="Rhea" id="RHEA:43160"/>
        <dbReference type="Rhea" id="RHEA-COMP:10369"/>
        <dbReference type="Rhea" id="RHEA-COMP:10370"/>
        <dbReference type="ChEBI" id="CHEBI:15378"/>
        <dbReference type="ChEBI" id="CHEBI:57856"/>
        <dbReference type="ChEBI" id="CHEBI:59789"/>
        <dbReference type="ChEBI" id="CHEBI:74411"/>
        <dbReference type="ChEBI" id="CHEBI:74449"/>
        <dbReference type="EC" id="2.1.1.223"/>
    </reaction>
</comment>
<comment type="subcellular location">
    <subcellularLocation>
        <location evidence="1">Cytoplasm</location>
    </subcellularLocation>
</comment>
<comment type="similarity">
    <text evidence="1">Belongs to the methyltransferase superfamily. tRNA (adenine-N(6)-)-methyltransferase family.</text>
</comment>
<evidence type="ECO:0000255" key="1">
    <source>
        <dbReference type="HAMAP-Rule" id="MF_01872"/>
    </source>
</evidence>
<protein>
    <recommendedName>
        <fullName evidence="1">tRNA1(Val) (adenine(37)-N6)-methyltransferase</fullName>
        <ecNumber evidence="1">2.1.1.223</ecNumber>
    </recommendedName>
    <alternativeName>
        <fullName evidence="1">tRNA m6A37 methyltransferase</fullName>
    </alternativeName>
</protein>
<sequence>MKSGTLKTKGFKFKQFSIASSNSGMPVSTDGVLLGAWADFHHCQNLLDIGTGTGLLSLMCAQRYVHLSITAVDIDAHAMEAAQENFSHSPWHSRLQLQHGDVLKLNFTHRFDGIICNPPYFNSGEQAQATQRATARHTDTLAHDALLLRCRELLTPNGKANFVLPLTEGEQFLQLAQQQGWHLHRLCRVKPSPNKPVHRLLFELGLSTATTSEEHLTINDGSTYSAAFVKLCQDFYLKM</sequence>
<accession>Q8DEQ3</accession>
<feature type="chain" id="PRO_0000387448" description="tRNA1(Val) (adenine(37)-N6)-methyltransferase">
    <location>
        <begin position="1"/>
        <end position="239"/>
    </location>
</feature>
<reference key="1">
    <citation type="submission" date="2002-12" db="EMBL/GenBank/DDBJ databases">
        <title>Complete genome sequence of Vibrio vulnificus CMCP6.</title>
        <authorList>
            <person name="Rhee J.H."/>
            <person name="Kim S.Y."/>
            <person name="Chung S.S."/>
            <person name="Kim J.J."/>
            <person name="Moon Y.H."/>
            <person name="Jeong H."/>
            <person name="Choy H.E."/>
        </authorList>
    </citation>
    <scope>NUCLEOTIDE SEQUENCE [LARGE SCALE GENOMIC DNA]</scope>
    <source>
        <strain>CMCP6</strain>
    </source>
</reference>
<proteinExistence type="inferred from homology"/>
<organism>
    <name type="scientific">Vibrio vulnificus (strain CMCP6)</name>
    <dbReference type="NCBI Taxonomy" id="216895"/>
    <lineage>
        <taxon>Bacteria</taxon>
        <taxon>Pseudomonadati</taxon>
        <taxon>Pseudomonadota</taxon>
        <taxon>Gammaproteobacteria</taxon>
        <taxon>Vibrionales</taxon>
        <taxon>Vibrionaceae</taxon>
        <taxon>Vibrio</taxon>
    </lineage>
</organism>
<gene>
    <name type="ordered locus">VV1_0533</name>
</gene>